<accession>D2HBJ8</accession>
<reference key="1">
    <citation type="journal article" date="2010" name="Nature">
        <title>The sequence and de novo assembly of the giant panda genome.</title>
        <authorList>
            <person name="Li R."/>
            <person name="Fan W."/>
            <person name="Tian G."/>
            <person name="Zhu H."/>
            <person name="He L."/>
            <person name="Cai J."/>
            <person name="Huang Q."/>
            <person name="Cai Q."/>
            <person name="Li B."/>
            <person name="Bai Y."/>
            <person name="Zhang Z."/>
            <person name="Zhang Y."/>
            <person name="Wang W."/>
            <person name="Li J."/>
            <person name="Wei F."/>
            <person name="Li H."/>
            <person name="Jian M."/>
            <person name="Li J."/>
            <person name="Zhang Z."/>
            <person name="Nielsen R."/>
            <person name="Li D."/>
            <person name="Gu W."/>
            <person name="Yang Z."/>
            <person name="Xuan Z."/>
            <person name="Ryder O.A."/>
            <person name="Leung F.C."/>
            <person name="Zhou Y."/>
            <person name="Cao J."/>
            <person name="Sun X."/>
            <person name="Fu Y."/>
            <person name="Fang X."/>
            <person name="Guo X."/>
            <person name="Wang B."/>
            <person name="Hou R."/>
            <person name="Shen F."/>
            <person name="Mu B."/>
            <person name="Ni P."/>
            <person name="Lin R."/>
            <person name="Qian W."/>
            <person name="Wang G."/>
            <person name="Yu C."/>
            <person name="Nie W."/>
            <person name="Wang J."/>
            <person name="Wu Z."/>
            <person name="Liang H."/>
            <person name="Min J."/>
            <person name="Wu Q."/>
            <person name="Cheng S."/>
            <person name="Ruan J."/>
            <person name="Wang M."/>
            <person name="Shi Z."/>
            <person name="Wen M."/>
            <person name="Liu B."/>
            <person name="Ren X."/>
            <person name="Zheng H."/>
            <person name="Dong D."/>
            <person name="Cook K."/>
            <person name="Shan G."/>
            <person name="Zhang H."/>
            <person name="Kosiol C."/>
            <person name="Xie X."/>
            <person name="Lu Z."/>
            <person name="Zheng H."/>
            <person name="Li Y."/>
            <person name="Steiner C.C."/>
            <person name="Lam T.T."/>
            <person name="Lin S."/>
            <person name="Zhang Q."/>
            <person name="Li G."/>
            <person name="Tian J."/>
            <person name="Gong T."/>
            <person name="Liu H."/>
            <person name="Zhang D."/>
            <person name="Fang L."/>
            <person name="Ye C."/>
            <person name="Zhang J."/>
            <person name="Hu W."/>
            <person name="Xu A."/>
            <person name="Ren Y."/>
            <person name="Zhang G."/>
            <person name="Bruford M.W."/>
            <person name="Li Q."/>
            <person name="Ma L."/>
            <person name="Guo Y."/>
            <person name="An N."/>
            <person name="Hu Y."/>
            <person name="Zheng Y."/>
            <person name="Shi Y."/>
            <person name="Li Z."/>
            <person name="Liu Q."/>
            <person name="Chen Y."/>
            <person name="Zhao J."/>
            <person name="Qu N."/>
            <person name="Zhao S."/>
            <person name="Tian F."/>
            <person name="Wang X."/>
            <person name="Wang H."/>
            <person name="Xu L."/>
            <person name="Liu X."/>
            <person name="Vinar T."/>
            <person name="Wang Y."/>
            <person name="Lam T.W."/>
            <person name="Yiu S.M."/>
            <person name="Liu S."/>
            <person name="Zhang H."/>
            <person name="Li D."/>
            <person name="Huang Y."/>
            <person name="Wang X."/>
            <person name="Yang G."/>
            <person name="Jiang Z."/>
            <person name="Wang J."/>
            <person name="Qin N."/>
            <person name="Li L."/>
            <person name="Li J."/>
            <person name="Bolund L."/>
            <person name="Kristiansen K."/>
            <person name="Wong G.K."/>
            <person name="Olson M."/>
            <person name="Zhang X."/>
            <person name="Li S."/>
            <person name="Yang H."/>
            <person name="Wang J."/>
            <person name="Wang J."/>
        </authorList>
    </citation>
    <scope>NUCLEOTIDE SEQUENCE [LARGE SCALE GENOMIC DNA]</scope>
</reference>
<sequence>MLTMDKCKHIGQLRLAQDHSILNPQKWHCVDCNTTESIWACLSCSHVACGRYIEEHALKHFQESSHPVALEVNEMYVFCYLCDDYVLNDNATGDLKLLRSMLSAIKSQNYQCTTRSGRVLRSMGTSDDTYYLHDGTQSLLQNEDQMYTALWHRRRILMSKIFRTWFEQSPTGRKRQEEQFQEKIAKREVKKRRQELEYQVKAELETIHPRKSLRLQGLAQSTTVEIVPVQVPLQTPASPAKDKVVSTSEDVRLKKASDSSGKRRPIVTPGVTGLRNLGNTCYMNSVLQVLSHLLIFRQCFLKLDLNQWLAVTASDKTRSPYKHPSITDTVYQMNECQETDTGSAPSRHPSLSLGLSGGASKSRKMELIQPREPSSQYISLCHELHTLFQVMWSGKWALVSPFAMLHSVWRLIPAFRGYAQQDAQEFLCELLDKIQHELETTGTRLPALIPTSQRKLIKQVLNVVNNIFHGQLLSQVTCLACDNKSNTIEPFWDLSLEFPERYQCNGKDIASQPCRVTEMLAKFTETEALEGKIYVCDHCNSKRRRFSSKSVVLTEAQKQLMICHLPQVLRLHLKRFRWSGRNNREKIGVHVGFEEILNMEPYCCRESLKSLRPECFIYDLSAVVMHHGKGFGSGHYTAYCYNSEGGFWVHCNDSKLSMCTMDEVCKAQAYILFYTQRVTENGHSKLLPPELLSGSQHPNEEADTSSNEILS</sequence>
<protein>
    <recommendedName>
        <fullName>Ubiquitin carboxyl-terminal hydrolase 44</fullName>
        <ecNumber>3.4.19.12</ecNumber>
    </recommendedName>
    <alternativeName>
        <fullName>Deubiquitinating enzyme 44</fullName>
    </alternativeName>
    <alternativeName>
        <fullName>Ubiquitin thioesterase 44</fullName>
    </alternativeName>
    <alternativeName>
        <fullName>Ubiquitin-specific-processing protease 44</fullName>
    </alternativeName>
</protein>
<proteinExistence type="inferred from homology"/>
<evidence type="ECO:0000250" key="1"/>
<evidence type="ECO:0000250" key="2">
    <source>
        <dbReference type="UniProtKB" id="Q8C2S0"/>
    </source>
</evidence>
<evidence type="ECO:0000250" key="3">
    <source>
        <dbReference type="UniProtKB" id="Q9H0E7"/>
    </source>
</evidence>
<evidence type="ECO:0000255" key="4">
    <source>
        <dbReference type="PROSITE-ProRule" id="PRU00502"/>
    </source>
</evidence>
<evidence type="ECO:0000255" key="5">
    <source>
        <dbReference type="PROSITE-ProRule" id="PRU10092"/>
    </source>
</evidence>
<evidence type="ECO:0000255" key="6">
    <source>
        <dbReference type="PROSITE-ProRule" id="PRU10093"/>
    </source>
</evidence>
<evidence type="ECO:0000256" key="7">
    <source>
        <dbReference type="SAM" id="MobiDB-lite"/>
    </source>
</evidence>
<evidence type="ECO:0000305" key="8"/>
<comment type="function">
    <text evidence="2 3">Deubiquitinase that plays a key regulatory role in the spindle assembly checkpoint or mitotic checkpoint by preventing premature anaphase onset. Acts by specifically mediating deubiquitination of CDC20, a negative regulator of the anaphase promoting complex/cyclosome (APC/C). Deubiquitination of CDC20 leads to stabilize the MAD2L1-CDC20-APC/C ternary complex (also named mitotic checkpoint complex), thereby preventing premature activation of the APC/C. Promotes association of MAD2L1 with CDC20 and reinforces the spindle assembly checkpoint. Also promotes the deubiquitination of histone H2A and H2B. Recruited to RNF8/RNF168-ubiquitinated chromatin surrounding double stranded breaks (DSBs), promotes hydrolysis of such ubiquitin conjugates, thus negatively regulating protein recruitment to damaged chromatin (By similarity). Participates in nucleotide excision repair (NER) pathway by deubiquitinating DDB2 to prevent its premature degradation so it can remain on damaged chromatin (By similarity). Promotes FOXP3 stabilization through 'Lys-48'-linked deubiquitination leading to increased stability and increased regulatory T-cell lineage stability. Also plays a positive role in innate immune response to DNA viruses by deubiquitinating STING1, selectively removing its 'Lys-48'-linked polyubiquitin chains and stabilizing it (By similarity).</text>
</comment>
<comment type="catalytic activity">
    <reaction evidence="3">
        <text>Thiol-dependent hydrolysis of ester, thioester, amide, peptide and isopeptide bonds formed by the C-terminal Gly of ubiquitin (a 76-residue protein attached to proteins as an intracellular targeting signal).</text>
        <dbReference type="EC" id="3.4.19.12"/>
    </reaction>
</comment>
<comment type="subunit">
    <text evidence="3">Interacts with the N-CoR components TBL1X and TBL1XR1.</text>
</comment>
<comment type="subcellular location">
    <subcellularLocation>
        <location evidence="3">Nucleus</location>
    </subcellularLocation>
    <subcellularLocation>
        <location evidence="3">Cytoplasm</location>
    </subcellularLocation>
    <text evidence="1">Peaks in interphase, with relatively low levels maintained throughout mitosis.</text>
</comment>
<comment type="PTM">
    <text evidence="1">Dephosphorylated by CTDP1.</text>
</comment>
<comment type="PTM">
    <text evidence="1">Ubiquitinated; undergoes both 'Lys-48'- and 'Lys-63'-linked polyubiquitination and is degraded by the proteasome.</text>
</comment>
<comment type="similarity">
    <text evidence="8">Belongs to the peptidase C19 family. USP44 subfamily.</text>
</comment>
<name>UBP44_AILME</name>
<gene>
    <name type="primary">USP44</name>
    <name type="ORF">PANDA_007904</name>
</gene>
<keyword id="KW-0131">Cell cycle</keyword>
<keyword id="KW-0132">Cell division</keyword>
<keyword id="KW-0963">Cytoplasm</keyword>
<keyword id="KW-0378">Hydrolase</keyword>
<keyword id="KW-0391">Immunity</keyword>
<keyword id="KW-0399">Innate immunity</keyword>
<keyword id="KW-0479">Metal-binding</keyword>
<keyword id="KW-0498">Mitosis</keyword>
<keyword id="KW-0539">Nucleus</keyword>
<keyword id="KW-0645">Protease</keyword>
<keyword id="KW-1185">Reference proteome</keyword>
<keyword id="KW-0788">Thiol protease</keyword>
<keyword id="KW-0832">Ubl conjugation</keyword>
<keyword id="KW-0833">Ubl conjugation pathway</keyword>
<keyword id="KW-0862">Zinc</keyword>
<keyword id="KW-0863">Zinc-finger</keyword>
<feature type="chain" id="PRO_0000395810" description="Ubiquitin carboxyl-terminal hydrolase 44">
    <location>
        <begin position="1"/>
        <end position="711"/>
    </location>
</feature>
<feature type="domain" description="USP">
    <location>
        <begin position="272"/>
        <end position="677"/>
    </location>
</feature>
<feature type="zinc finger region" description="UBP-type" evidence="4">
    <location>
        <begin position="5"/>
        <end position="102"/>
    </location>
</feature>
<feature type="region of interest" description="Disordered" evidence="7">
    <location>
        <begin position="237"/>
        <end position="264"/>
    </location>
</feature>
<feature type="region of interest" description="Disordered" evidence="7">
    <location>
        <begin position="336"/>
        <end position="358"/>
    </location>
</feature>
<feature type="region of interest" description="Disordered" evidence="7">
    <location>
        <begin position="689"/>
        <end position="711"/>
    </location>
</feature>
<feature type="compositionally biased region" description="Basic and acidic residues" evidence="7">
    <location>
        <begin position="240"/>
        <end position="261"/>
    </location>
</feature>
<feature type="active site" description="Nucleophile" evidence="5 6">
    <location>
        <position position="281"/>
    </location>
</feature>
<feature type="active site" description="Proton acceptor" evidence="5 6">
    <location>
        <position position="635"/>
    </location>
</feature>
<feature type="binding site" evidence="4">
    <location>
        <position position="7"/>
    </location>
    <ligand>
        <name>Zn(2+)</name>
        <dbReference type="ChEBI" id="CHEBI:29105"/>
        <label>1</label>
    </ligand>
</feature>
<feature type="binding site" evidence="4">
    <location>
        <position position="9"/>
    </location>
    <ligand>
        <name>Zn(2+)</name>
        <dbReference type="ChEBI" id="CHEBI:29105"/>
        <label>1</label>
    </ligand>
</feature>
<feature type="binding site" evidence="4">
    <location>
        <position position="29"/>
    </location>
    <ligand>
        <name>Zn(2+)</name>
        <dbReference type="ChEBI" id="CHEBI:29105"/>
        <label>2</label>
    </ligand>
</feature>
<feature type="binding site" evidence="4">
    <location>
        <position position="32"/>
    </location>
    <ligand>
        <name>Zn(2+)</name>
        <dbReference type="ChEBI" id="CHEBI:29105"/>
        <label>2</label>
    </ligand>
</feature>
<feature type="binding site" evidence="4">
    <location>
        <position position="41"/>
    </location>
    <ligand>
        <name>Zn(2+)</name>
        <dbReference type="ChEBI" id="CHEBI:29105"/>
        <label>3</label>
    </ligand>
</feature>
<feature type="binding site" evidence="4">
    <location>
        <position position="44"/>
    </location>
    <ligand>
        <name>Zn(2+)</name>
        <dbReference type="ChEBI" id="CHEBI:29105"/>
        <label>3</label>
    </ligand>
</feature>
<feature type="binding site" evidence="4">
    <location>
        <position position="49"/>
    </location>
    <ligand>
        <name>Zn(2+)</name>
        <dbReference type="ChEBI" id="CHEBI:29105"/>
        <label>2</label>
    </ligand>
</feature>
<feature type="binding site" evidence="4">
    <location>
        <position position="56"/>
    </location>
    <ligand>
        <name>Zn(2+)</name>
        <dbReference type="ChEBI" id="CHEBI:29105"/>
        <label>2</label>
    </ligand>
</feature>
<feature type="binding site" evidence="4">
    <location>
        <position position="60"/>
    </location>
    <ligand>
        <name>Zn(2+)</name>
        <dbReference type="ChEBI" id="CHEBI:29105"/>
        <label>3</label>
    </ligand>
</feature>
<feature type="binding site" evidence="4">
    <location>
        <position position="66"/>
    </location>
    <ligand>
        <name>Zn(2+)</name>
        <dbReference type="ChEBI" id="CHEBI:29105"/>
        <label>3</label>
    </ligand>
</feature>
<feature type="binding site" evidence="4">
    <location>
        <position position="79"/>
    </location>
    <ligand>
        <name>Zn(2+)</name>
        <dbReference type="ChEBI" id="CHEBI:29105"/>
        <label>1</label>
    </ligand>
</feature>
<feature type="binding site" evidence="4">
    <location>
        <position position="82"/>
    </location>
    <ligand>
        <name>Zn(2+)</name>
        <dbReference type="ChEBI" id="CHEBI:29105"/>
        <label>1</label>
    </ligand>
</feature>
<organism>
    <name type="scientific">Ailuropoda melanoleuca</name>
    <name type="common">Giant panda</name>
    <dbReference type="NCBI Taxonomy" id="9646"/>
    <lineage>
        <taxon>Eukaryota</taxon>
        <taxon>Metazoa</taxon>
        <taxon>Chordata</taxon>
        <taxon>Craniata</taxon>
        <taxon>Vertebrata</taxon>
        <taxon>Euteleostomi</taxon>
        <taxon>Mammalia</taxon>
        <taxon>Eutheria</taxon>
        <taxon>Laurasiatheria</taxon>
        <taxon>Carnivora</taxon>
        <taxon>Caniformia</taxon>
        <taxon>Ursidae</taxon>
        <taxon>Ailuropoda</taxon>
    </lineage>
</organism>
<dbReference type="EC" id="3.4.19.12"/>
<dbReference type="EMBL" id="GL192660">
    <property type="protein sequence ID" value="EFB15980.1"/>
    <property type="molecule type" value="Genomic_DNA"/>
</dbReference>
<dbReference type="RefSeq" id="XP_011223301.1">
    <property type="nucleotide sequence ID" value="XM_011224999.3"/>
</dbReference>
<dbReference type="STRING" id="9646.ENSAMEP00000002292"/>
<dbReference type="Ensembl" id="ENSAMET00000002387.2">
    <property type="protein sequence ID" value="ENSAMEP00000002292.1"/>
    <property type="gene ID" value="ENSAMEG00000002189.2"/>
</dbReference>
<dbReference type="GeneID" id="100470180"/>
<dbReference type="KEGG" id="aml:100470180"/>
<dbReference type="CTD" id="84101"/>
<dbReference type="eggNOG" id="KOG1867">
    <property type="taxonomic scope" value="Eukaryota"/>
</dbReference>
<dbReference type="GeneTree" id="ENSGT00940000160526"/>
<dbReference type="HOGENOM" id="CLU_008279_13_1_1"/>
<dbReference type="InParanoid" id="D2HBJ8"/>
<dbReference type="OMA" id="RYQCNGK"/>
<dbReference type="OrthoDB" id="21192at2759"/>
<dbReference type="TreeFam" id="TF315281"/>
<dbReference type="Proteomes" id="UP000008912">
    <property type="component" value="Unassembled WGS sequence"/>
</dbReference>
<dbReference type="GO" id="GO:0005737">
    <property type="term" value="C:cytoplasm"/>
    <property type="evidence" value="ECO:0007669"/>
    <property type="project" value="UniProtKB-SubCell"/>
</dbReference>
<dbReference type="GO" id="GO:0005634">
    <property type="term" value="C:nucleus"/>
    <property type="evidence" value="ECO:0000250"/>
    <property type="project" value="UniProtKB"/>
</dbReference>
<dbReference type="GO" id="GO:0004843">
    <property type="term" value="F:cysteine-type deubiquitinase activity"/>
    <property type="evidence" value="ECO:0000250"/>
    <property type="project" value="UniProtKB"/>
</dbReference>
<dbReference type="GO" id="GO:0008270">
    <property type="term" value="F:zinc ion binding"/>
    <property type="evidence" value="ECO:0007669"/>
    <property type="project" value="UniProtKB-KW"/>
</dbReference>
<dbReference type="GO" id="GO:0140374">
    <property type="term" value="P:antiviral innate immune response"/>
    <property type="evidence" value="ECO:0007669"/>
    <property type="project" value="Ensembl"/>
</dbReference>
<dbReference type="GO" id="GO:0051301">
    <property type="term" value="P:cell division"/>
    <property type="evidence" value="ECO:0007669"/>
    <property type="project" value="UniProtKB-KW"/>
</dbReference>
<dbReference type="GO" id="GO:0007059">
    <property type="term" value="P:chromosome segregation"/>
    <property type="evidence" value="ECO:0007669"/>
    <property type="project" value="Ensembl"/>
</dbReference>
<dbReference type="GO" id="GO:0045841">
    <property type="term" value="P:negative regulation of mitotic metaphase/anaphase transition"/>
    <property type="evidence" value="ECO:0007669"/>
    <property type="project" value="Ensembl"/>
</dbReference>
<dbReference type="GO" id="GO:1904667">
    <property type="term" value="P:negative regulation of ubiquitin protein ligase activity"/>
    <property type="evidence" value="ECO:0000250"/>
    <property type="project" value="UniProtKB"/>
</dbReference>
<dbReference type="GO" id="GO:0043161">
    <property type="term" value="P:proteasome-mediated ubiquitin-dependent protein catabolic process"/>
    <property type="evidence" value="ECO:0000250"/>
    <property type="project" value="UniProtKB"/>
</dbReference>
<dbReference type="GO" id="GO:0016579">
    <property type="term" value="P:protein deubiquitination"/>
    <property type="evidence" value="ECO:0000250"/>
    <property type="project" value="UniProtKB"/>
</dbReference>
<dbReference type="GO" id="GO:0090266">
    <property type="term" value="P:regulation of mitotic cell cycle spindle assembly checkpoint"/>
    <property type="evidence" value="ECO:0000250"/>
    <property type="project" value="UniProtKB"/>
</dbReference>
<dbReference type="GO" id="GO:0045066">
    <property type="term" value="P:regulatory T cell differentiation"/>
    <property type="evidence" value="ECO:0007669"/>
    <property type="project" value="Ensembl"/>
</dbReference>
<dbReference type="FunFam" id="3.90.70.10:FF:000492">
    <property type="entry name" value="ubiquitin carboxyl-terminal hydrolase 44-like"/>
    <property type="match status" value="1"/>
</dbReference>
<dbReference type="FunFam" id="3.30.40.10:FF:000067">
    <property type="entry name" value="Ubiquitinyl hydrolase 1"/>
    <property type="match status" value="1"/>
</dbReference>
<dbReference type="Gene3D" id="3.90.70.10">
    <property type="entry name" value="Cysteine proteinases"/>
    <property type="match status" value="1"/>
</dbReference>
<dbReference type="Gene3D" id="3.30.40.10">
    <property type="entry name" value="Zinc/RING finger domain, C3HC4 (zinc finger)"/>
    <property type="match status" value="1"/>
</dbReference>
<dbReference type="InterPro" id="IPR038765">
    <property type="entry name" value="Papain-like_cys_pep_sf"/>
</dbReference>
<dbReference type="InterPro" id="IPR001394">
    <property type="entry name" value="Peptidase_C19_UCH"/>
</dbReference>
<dbReference type="InterPro" id="IPR050185">
    <property type="entry name" value="Ub_carboxyl-term_hydrolase"/>
</dbReference>
<dbReference type="InterPro" id="IPR018200">
    <property type="entry name" value="USP_CS"/>
</dbReference>
<dbReference type="InterPro" id="IPR028889">
    <property type="entry name" value="USP_dom"/>
</dbReference>
<dbReference type="InterPro" id="IPR013083">
    <property type="entry name" value="Znf_RING/FYVE/PHD"/>
</dbReference>
<dbReference type="InterPro" id="IPR001607">
    <property type="entry name" value="Znf_UBP"/>
</dbReference>
<dbReference type="PANTHER" id="PTHR21646">
    <property type="entry name" value="UBIQUITIN CARBOXYL-TERMINAL HYDROLASE"/>
    <property type="match status" value="1"/>
</dbReference>
<dbReference type="PANTHER" id="PTHR21646:SF15">
    <property type="entry name" value="UBIQUITIN CARBOXYL-TERMINAL HYDROLASE 44"/>
    <property type="match status" value="1"/>
</dbReference>
<dbReference type="Pfam" id="PF00443">
    <property type="entry name" value="UCH"/>
    <property type="match status" value="1"/>
</dbReference>
<dbReference type="Pfam" id="PF02148">
    <property type="entry name" value="zf-UBP"/>
    <property type="match status" value="1"/>
</dbReference>
<dbReference type="SMART" id="SM00290">
    <property type="entry name" value="ZnF_UBP"/>
    <property type="match status" value="1"/>
</dbReference>
<dbReference type="SUPFAM" id="SSF54001">
    <property type="entry name" value="Cysteine proteinases"/>
    <property type="match status" value="1"/>
</dbReference>
<dbReference type="SUPFAM" id="SSF57850">
    <property type="entry name" value="RING/U-box"/>
    <property type="match status" value="1"/>
</dbReference>
<dbReference type="PROSITE" id="PS00972">
    <property type="entry name" value="USP_1"/>
    <property type="match status" value="1"/>
</dbReference>
<dbReference type="PROSITE" id="PS00973">
    <property type="entry name" value="USP_2"/>
    <property type="match status" value="1"/>
</dbReference>
<dbReference type="PROSITE" id="PS50235">
    <property type="entry name" value="USP_3"/>
    <property type="match status" value="1"/>
</dbReference>
<dbReference type="PROSITE" id="PS50271">
    <property type="entry name" value="ZF_UBP"/>
    <property type="match status" value="1"/>
</dbReference>